<accession>E7EKH5</accession>
<organism evidence="4">
    <name type="scientific">Sylvirana spinulosa</name>
    <name type="common">Fine-spined frog</name>
    <name type="synonym">Hylarana spinulosa</name>
    <dbReference type="NCBI Taxonomy" id="369515"/>
    <lineage>
        <taxon>Eukaryota</taxon>
        <taxon>Metazoa</taxon>
        <taxon>Chordata</taxon>
        <taxon>Craniata</taxon>
        <taxon>Vertebrata</taxon>
        <taxon>Euteleostomi</taxon>
        <taxon>Amphibia</taxon>
        <taxon>Batrachia</taxon>
        <taxon>Anura</taxon>
        <taxon>Neobatrachia</taxon>
        <taxon>Ranoidea</taxon>
        <taxon>Ranidae</taxon>
        <taxon>Sylvirana</taxon>
    </lineage>
</organism>
<evidence type="ECO:0000250" key="1">
    <source>
        <dbReference type="UniProtKB" id="P80398"/>
    </source>
</evidence>
<evidence type="ECO:0000255" key="2"/>
<evidence type="ECO:0000269" key="3">
    <source>
    </source>
</evidence>
<evidence type="ECO:0000303" key="4">
    <source>
    </source>
</evidence>
<evidence type="ECO:0000305" key="5">
    <source>
    </source>
</evidence>
<evidence type="ECO:0000312" key="6">
    <source>
        <dbReference type="EMBL" id="ADV36175.1"/>
    </source>
</evidence>
<comment type="function">
    <text evidence="3">Antimicrobial peptide. Active against some Gram-negative and a variety of Gram-positive bacterial strains. Active against fungus C.glabrata 090902 but not against C.albicans ATCC 10231. Shows hemolytic activity against human erythrocytes.</text>
</comment>
<comment type="subcellular location">
    <subcellularLocation>
        <location evidence="5">Secreted</location>
    </subcellularLocation>
</comment>
<comment type="tissue specificity">
    <text evidence="5">Expressed by the skin glands.</text>
</comment>
<comment type="similarity">
    <text evidence="2">Belongs to the frog skin active peptide (FSAP) family. Brevinin subfamily.</text>
</comment>
<protein>
    <recommendedName>
        <fullName evidence="4">Brevinin-2SN2</fullName>
    </recommendedName>
</protein>
<proteinExistence type="evidence at protein level"/>
<keyword id="KW-0878">Amphibian defense peptide</keyword>
<keyword id="KW-0044">Antibiotic</keyword>
<keyword id="KW-0929">Antimicrobial</keyword>
<keyword id="KW-0165">Cleavage on pair of basic residues</keyword>
<keyword id="KW-0204">Cytolysis</keyword>
<keyword id="KW-0903">Direct protein sequencing</keyword>
<keyword id="KW-1015">Disulfide bond</keyword>
<keyword id="KW-0295">Fungicide</keyword>
<keyword id="KW-0354">Hemolysis</keyword>
<keyword id="KW-0964">Secreted</keyword>
<keyword id="KW-0732">Signal</keyword>
<reference evidence="6" key="1">
    <citation type="journal article" date="2013" name="Biochimie">
        <title>Identification of multiple antimicrobial peptides from the skin of fine-spined frog, Hylarana spinulosa (Ranidae).</title>
        <authorList>
            <person name="Yang X."/>
            <person name="Hu Y."/>
            <person name="Xu S."/>
            <person name="Hu Y."/>
            <person name="Meng H."/>
            <person name="Guo C."/>
            <person name="Liu Y."/>
            <person name="Liu J."/>
            <person name="Yu Z."/>
            <person name="Wang H."/>
        </authorList>
    </citation>
    <scope>NUCLEOTIDE SEQUENCE [MRNA]</scope>
    <scope>PROTEIN SEQUENCE OF 43-75</scope>
    <scope>FUNCTION</scope>
    <scope>SYNTHESIS</scope>
    <scope>IDENTIFICATION BY MASS SPECTROMETRY</scope>
    <source>
        <tissue evidence="4">Skin</tissue>
    </source>
</reference>
<feature type="signal peptide" evidence="2">
    <location>
        <begin position="1"/>
        <end position="22"/>
    </location>
</feature>
<feature type="propeptide" id="PRO_0000439774" description="Removed in mature form" evidence="5">
    <location>
        <begin position="23"/>
        <end position="40"/>
    </location>
</feature>
<feature type="peptide" id="PRO_0000439775" description="Brevinin-2SN2" evidence="3">
    <location>
        <begin position="43"/>
        <end position="75"/>
    </location>
</feature>
<feature type="disulfide bond" evidence="1">
    <location>
        <begin position="69"/>
        <end position="75"/>
    </location>
</feature>
<sequence>MFTLKKPLLFLFFLGTISLSFCEEERGADEDDGGEMTEEEKRGVLDTLKNVAIGVAKGAGTGVLKALLCQLDKSC</sequence>
<name>B2S21_SYLSP</name>
<dbReference type="EMBL" id="HQ735152">
    <property type="protein sequence ID" value="ADV36175.1"/>
    <property type="molecule type" value="mRNA"/>
</dbReference>
<dbReference type="GO" id="GO:0005576">
    <property type="term" value="C:extracellular region"/>
    <property type="evidence" value="ECO:0007669"/>
    <property type="project" value="UniProtKB-SubCell"/>
</dbReference>
<dbReference type="GO" id="GO:0050832">
    <property type="term" value="P:defense response to fungus"/>
    <property type="evidence" value="ECO:0000314"/>
    <property type="project" value="UniProtKB"/>
</dbReference>
<dbReference type="GO" id="GO:0050829">
    <property type="term" value="P:defense response to Gram-negative bacterium"/>
    <property type="evidence" value="ECO:0000314"/>
    <property type="project" value="UniProtKB"/>
</dbReference>
<dbReference type="GO" id="GO:0050830">
    <property type="term" value="P:defense response to Gram-positive bacterium"/>
    <property type="evidence" value="ECO:0000314"/>
    <property type="project" value="UniProtKB"/>
</dbReference>
<dbReference type="GO" id="GO:0044179">
    <property type="term" value="P:hemolysis in another organism"/>
    <property type="evidence" value="ECO:0000314"/>
    <property type="project" value="UniProtKB"/>
</dbReference>
<dbReference type="InterPro" id="IPR012521">
    <property type="entry name" value="Antimicrobial_frog_2"/>
</dbReference>
<dbReference type="InterPro" id="IPR004275">
    <property type="entry name" value="Frog_antimicrobial_propeptide"/>
</dbReference>
<dbReference type="Pfam" id="PF08023">
    <property type="entry name" value="Antimicrobial_2"/>
    <property type="match status" value="1"/>
</dbReference>
<dbReference type="Pfam" id="PF03032">
    <property type="entry name" value="FSAP_sig_propep"/>
    <property type="match status" value="1"/>
</dbReference>